<gene>
    <name evidence="1" type="primary">resA</name>
    <name type="ordered locus">BH1577</name>
</gene>
<comment type="function">
    <text evidence="1">Thiol-disulfide oxidoreductase which is required in disulfide reduction during c-type cytochrome synthesis. May accept reducing equivalents from CcdA, leading to breakage of disulfide bonds in apocytochrome c; following this reduction heme can be covalently attached.</text>
</comment>
<comment type="pathway">
    <text evidence="1">Protein modification; cytochrome c assembly.</text>
</comment>
<comment type="subcellular location">
    <subcellularLocation>
        <location evidence="1">Cell membrane</location>
        <topology evidence="1">Single-pass type II membrane protein</topology>
    </subcellularLocation>
    <text evidence="1">The thioredoxin-like motif is exposed on the outside of the membrane.</text>
</comment>
<comment type="similarity">
    <text evidence="1">Belongs to the thioredoxin family. ResA subfamily.</text>
</comment>
<dbReference type="EMBL" id="BA000004">
    <property type="protein sequence ID" value="BAB05296.1"/>
    <property type="molecule type" value="Genomic_DNA"/>
</dbReference>
<dbReference type="PIR" id="A83847">
    <property type="entry name" value="A83847"/>
</dbReference>
<dbReference type="RefSeq" id="WP_010897740.1">
    <property type="nucleotide sequence ID" value="NC_002570.2"/>
</dbReference>
<dbReference type="SMR" id="Q9KCJ4"/>
<dbReference type="STRING" id="272558.gene:10727475"/>
<dbReference type="GeneID" id="87597198"/>
<dbReference type="KEGG" id="bha:BH1577"/>
<dbReference type="eggNOG" id="COG0526">
    <property type="taxonomic scope" value="Bacteria"/>
</dbReference>
<dbReference type="HOGENOM" id="CLU_042529_11_2_9"/>
<dbReference type="OrthoDB" id="25753at2"/>
<dbReference type="UniPathway" id="UPA00555"/>
<dbReference type="Proteomes" id="UP000001258">
    <property type="component" value="Chromosome"/>
</dbReference>
<dbReference type="GO" id="GO:0005886">
    <property type="term" value="C:plasma membrane"/>
    <property type="evidence" value="ECO:0007669"/>
    <property type="project" value="UniProtKB-SubCell"/>
</dbReference>
<dbReference type="GO" id="GO:0016209">
    <property type="term" value="F:antioxidant activity"/>
    <property type="evidence" value="ECO:0007669"/>
    <property type="project" value="InterPro"/>
</dbReference>
<dbReference type="GO" id="GO:0015036">
    <property type="term" value="F:disulfide oxidoreductase activity"/>
    <property type="evidence" value="ECO:0007669"/>
    <property type="project" value="UniProtKB-UniRule"/>
</dbReference>
<dbReference type="GO" id="GO:0017004">
    <property type="term" value="P:cytochrome complex assembly"/>
    <property type="evidence" value="ECO:0007669"/>
    <property type="project" value="UniProtKB-UniRule"/>
</dbReference>
<dbReference type="CDD" id="cd02966">
    <property type="entry name" value="TlpA_like_family"/>
    <property type="match status" value="1"/>
</dbReference>
<dbReference type="Gene3D" id="3.40.30.10">
    <property type="entry name" value="Glutaredoxin"/>
    <property type="match status" value="1"/>
</dbReference>
<dbReference type="HAMAP" id="MF_01319">
    <property type="entry name" value="ResA"/>
    <property type="match status" value="1"/>
</dbReference>
<dbReference type="InterPro" id="IPR000866">
    <property type="entry name" value="AhpC/TSA"/>
</dbReference>
<dbReference type="InterPro" id="IPR023555">
    <property type="entry name" value="Thiol-dS_OxRdtase_ResA"/>
</dbReference>
<dbReference type="InterPro" id="IPR036249">
    <property type="entry name" value="Thioredoxin-like_sf"/>
</dbReference>
<dbReference type="InterPro" id="IPR017937">
    <property type="entry name" value="Thioredoxin_CS"/>
</dbReference>
<dbReference type="InterPro" id="IPR013766">
    <property type="entry name" value="Thioredoxin_domain"/>
</dbReference>
<dbReference type="InterPro" id="IPR050553">
    <property type="entry name" value="Thioredoxin_ResA/DsbE_sf"/>
</dbReference>
<dbReference type="NCBIfam" id="NF002854">
    <property type="entry name" value="PRK03147.1"/>
    <property type="match status" value="1"/>
</dbReference>
<dbReference type="PANTHER" id="PTHR42852">
    <property type="entry name" value="THIOL:DISULFIDE INTERCHANGE PROTEIN DSBE"/>
    <property type="match status" value="1"/>
</dbReference>
<dbReference type="PANTHER" id="PTHR42852:SF6">
    <property type="entry name" value="THIOL:DISULFIDE INTERCHANGE PROTEIN DSBE"/>
    <property type="match status" value="1"/>
</dbReference>
<dbReference type="Pfam" id="PF00578">
    <property type="entry name" value="AhpC-TSA"/>
    <property type="match status" value="1"/>
</dbReference>
<dbReference type="SUPFAM" id="SSF52833">
    <property type="entry name" value="Thioredoxin-like"/>
    <property type="match status" value="1"/>
</dbReference>
<dbReference type="PROSITE" id="PS00194">
    <property type="entry name" value="THIOREDOXIN_1"/>
    <property type="match status" value="1"/>
</dbReference>
<dbReference type="PROSITE" id="PS51352">
    <property type="entry name" value="THIOREDOXIN_2"/>
    <property type="match status" value="1"/>
</dbReference>
<organism>
    <name type="scientific">Halalkalibacterium halodurans (strain ATCC BAA-125 / DSM 18197 / FERM 7344 / JCM 9153 / C-125)</name>
    <name type="common">Bacillus halodurans</name>
    <dbReference type="NCBI Taxonomy" id="272558"/>
    <lineage>
        <taxon>Bacteria</taxon>
        <taxon>Bacillati</taxon>
        <taxon>Bacillota</taxon>
        <taxon>Bacilli</taxon>
        <taxon>Bacillales</taxon>
        <taxon>Bacillaceae</taxon>
        <taxon>Halalkalibacterium (ex Joshi et al. 2022)</taxon>
    </lineage>
</organism>
<feature type="chain" id="PRO_0000120148" description="Thiol-disulfide oxidoreductase ResA">
    <location>
        <begin position="1"/>
        <end position="176"/>
    </location>
</feature>
<feature type="transmembrane region" description="Helical; Signal-anchor for type II membrane protein" evidence="1">
    <location>
        <begin position="11"/>
        <end position="30"/>
    </location>
</feature>
<feature type="domain" description="Thioredoxin" evidence="1">
    <location>
        <begin position="36"/>
        <end position="176"/>
    </location>
</feature>
<feature type="disulfide bond" description="Redox-active" evidence="1">
    <location>
        <begin position="74"/>
        <end position="77"/>
    </location>
</feature>
<keyword id="KW-1003">Cell membrane</keyword>
<keyword id="KW-0201">Cytochrome c-type biogenesis</keyword>
<keyword id="KW-1015">Disulfide bond</keyword>
<keyword id="KW-0472">Membrane</keyword>
<keyword id="KW-0560">Oxidoreductase</keyword>
<keyword id="KW-0676">Redox-active center</keyword>
<keyword id="KW-1185">Reference proteome</keyword>
<keyword id="KW-0735">Signal-anchor</keyword>
<keyword id="KW-0812">Transmembrane</keyword>
<keyword id="KW-1133">Transmembrane helix</keyword>
<proteinExistence type="inferred from homology"/>
<name>RESA_HALH5</name>
<reference key="1">
    <citation type="journal article" date="2000" name="Nucleic Acids Res.">
        <title>Complete genome sequence of the alkaliphilic bacterium Bacillus halodurans and genomic sequence comparison with Bacillus subtilis.</title>
        <authorList>
            <person name="Takami H."/>
            <person name="Nakasone K."/>
            <person name="Takaki Y."/>
            <person name="Maeno G."/>
            <person name="Sasaki R."/>
            <person name="Masui N."/>
            <person name="Fuji F."/>
            <person name="Hirama C."/>
            <person name="Nakamura Y."/>
            <person name="Ogasawara N."/>
            <person name="Kuhara S."/>
            <person name="Horikoshi K."/>
        </authorList>
    </citation>
    <scope>NUCLEOTIDE SEQUENCE [LARGE SCALE GENOMIC DNA]</scope>
    <source>
        <strain>ATCC BAA-125 / DSM 18197 / FERM 7344 / JCM 9153 / C-125</strain>
    </source>
</reference>
<sequence>MDKRKRFWMRLSILAVISVALGYTFYSNFFADRSLARAGEQAVNFVLEDLEGESIELRELEGKGVFLNFWGTYCPPCEREMPHMEKLYGEYKEQGVEIIAVNANEPELTVQRFVDRYGLSFPIVIDKGLNVIDAYGIRPLPTTILINEHGEIVKVHTGGMTEQMVEEFMELIKPEA</sequence>
<protein>
    <recommendedName>
        <fullName evidence="1">Thiol-disulfide oxidoreductase ResA</fullName>
    </recommendedName>
</protein>
<accession>Q9KCJ4</accession>
<evidence type="ECO:0000255" key="1">
    <source>
        <dbReference type="HAMAP-Rule" id="MF_01319"/>
    </source>
</evidence>